<proteinExistence type="inferred from homology"/>
<protein>
    <recommendedName>
        <fullName evidence="1">DNA topoisomerase 1</fullName>
        <ecNumber evidence="1">5.6.2.1</ecNumber>
    </recommendedName>
    <alternativeName>
        <fullName evidence="1">DNA topoisomerase I</fullName>
    </alternativeName>
    <alternativeName>
        <fullName>Omega-protein</fullName>
    </alternativeName>
    <alternativeName>
        <fullName>Relaxing enzyme</fullName>
    </alternativeName>
    <alternativeName>
        <fullName>Swivelase</fullName>
    </alternativeName>
    <alternativeName>
        <fullName>Untwisting enzyme</fullName>
    </alternativeName>
</protein>
<accession>P73810</accession>
<comment type="function">
    <text evidence="1">Releases the supercoiling and torsional tension of DNA, which is introduced during the DNA replication and transcription, by transiently cleaving and rejoining one strand of the DNA duplex. Introduces a single-strand break via transesterification at a target site in duplex DNA. The scissile phosphodiester is attacked by the catalytic tyrosine of the enzyme, resulting in the formation of a DNA-(5'-phosphotyrosyl)-enzyme intermediate and the expulsion of a 3'-OH DNA strand. The free DNA strand then undergoes passage around the unbroken strand, thus removing DNA supercoils. Finally, in the religation step, the DNA 3'-OH attacks the covalent intermediate to expel the active-site tyrosine and restore the DNA phosphodiester backbone.</text>
</comment>
<comment type="catalytic activity">
    <reaction evidence="1">
        <text>ATP-independent breakage of single-stranded DNA, followed by passage and rejoining.</text>
        <dbReference type="EC" id="5.6.2.1"/>
    </reaction>
</comment>
<comment type="cofactor">
    <cofactor evidence="1">
        <name>Mg(2+)</name>
        <dbReference type="ChEBI" id="CHEBI:18420"/>
    </cofactor>
</comment>
<comment type="subunit">
    <text evidence="1">Monomer.</text>
</comment>
<comment type="similarity">
    <text evidence="1">Belongs to the type IA topoisomerase family.</text>
</comment>
<evidence type="ECO:0000255" key="1">
    <source>
        <dbReference type="HAMAP-Rule" id="MF_00952"/>
    </source>
</evidence>
<evidence type="ECO:0000255" key="2">
    <source>
        <dbReference type="PROSITE-ProRule" id="PRU01383"/>
    </source>
</evidence>
<evidence type="ECO:0000256" key="3">
    <source>
        <dbReference type="SAM" id="MobiDB-lite"/>
    </source>
</evidence>
<sequence>MSKLVIVESPTKARTIRNYLPQDYRVEASMGHVRDLPASAEEVPAAYKDKSWANLGVNVEDHFSPLYVIPKSKKKVVKELQTALKNADEVILATDEDREGESISWHLLQLLQPKVPIKRMVFHEITQEAIRSALENCRDIDENLVHAQETRRILDRLVGYTLSPLLWKKIAWGLSAGRVQSVAVRLIVQRERARRAFKTAGYWDLKAELEQNKNPFQAKLMTLGGTKLANGSDFDPNTGALLPDKQVVVLDEAQAIALKERLTGKPWAVVNTEEKPGVRKPSPPFTTSTLQQEANRKLGISARDTMRVAQKLYEEGYITYMRTDSVHLSDQAVTAARNCVQQMYGKEYLSPQPKQYTTKSKGAQEAHEAIRPAGTEFRIPNQTGLKDRELALYELIWKRTVACQMADARITQLSVLLKVEDAEFRAAGKRIDFPGYFRAYVEGSDDPDAALENQEVILPPLKVGDRPNCREIDTVGHETQPPARYTEASLVKTLESEGVGRPSTYASIIGTIIDRGYVQMRSKALTPTFTAFAVVSLLESHFPDLVDTGFTSRMEQKLDEIAIGKTQWLPYLQGFFLGESGLENQVKVRQDQIDPAIAKAIELENLAAKVKIGKFGPYIEIPQGEEIITASIPQDLTPADLNPEQVAVLLKQKTEGPDKVGIHPETGEPIFILIGAYGPYVQLGEATEENKKPKRTSLPKGVKPEDVTLEMAVGLLALPRNLGEHPESGKNIKASLGRFGPYVVHDQGKDGKDYRSLKGDDDVLTITLERALELLAEPKRGRGSRTPLKQLGLHPEDQEPVNLFKGPYGVYIKHGKVNASLPEGETEETITLEKALPLLAEKAGSGKKTSRKKATTTAKGTKKTTSKKASATGTAKKTTTKRTTRKKAASPDQSSEAG</sequence>
<keyword id="KW-0238">DNA-binding</keyword>
<keyword id="KW-0413">Isomerase</keyword>
<keyword id="KW-0460">Magnesium</keyword>
<keyword id="KW-0479">Metal-binding</keyword>
<keyword id="KW-1185">Reference proteome</keyword>
<keyword id="KW-0799">Topoisomerase</keyword>
<name>TOP1_SYNY3</name>
<dbReference type="EC" id="5.6.2.1" evidence="1"/>
<dbReference type="EMBL" id="BA000022">
    <property type="protein sequence ID" value="BAA17864.1"/>
    <property type="molecule type" value="Genomic_DNA"/>
</dbReference>
<dbReference type="PIR" id="S74903">
    <property type="entry name" value="S74903"/>
</dbReference>
<dbReference type="SMR" id="P73810"/>
<dbReference type="FunCoup" id="P73810">
    <property type="interactions" value="332"/>
</dbReference>
<dbReference type="STRING" id="1148.gene:10498733"/>
<dbReference type="PaxDb" id="1148-1652946"/>
<dbReference type="EnsemblBacteria" id="BAA17864">
    <property type="protein sequence ID" value="BAA17864"/>
    <property type="gene ID" value="BAA17864"/>
</dbReference>
<dbReference type="KEGG" id="syn:slr2058"/>
<dbReference type="eggNOG" id="COG0550">
    <property type="taxonomic scope" value="Bacteria"/>
</dbReference>
<dbReference type="eggNOG" id="COG1754">
    <property type="taxonomic scope" value="Bacteria"/>
</dbReference>
<dbReference type="InParanoid" id="P73810"/>
<dbReference type="PhylomeDB" id="P73810"/>
<dbReference type="Proteomes" id="UP000001425">
    <property type="component" value="Chromosome"/>
</dbReference>
<dbReference type="GO" id="GO:0003677">
    <property type="term" value="F:DNA binding"/>
    <property type="evidence" value="ECO:0007669"/>
    <property type="project" value="UniProtKB-KW"/>
</dbReference>
<dbReference type="GO" id="GO:0003917">
    <property type="term" value="F:DNA topoisomerase type I (single strand cut, ATP-independent) activity"/>
    <property type="evidence" value="ECO:0007669"/>
    <property type="project" value="UniProtKB-UniRule"/>
</dbReference>
<dbReference type="GO" id="GO:0046872">
    <property type="term" value="F:metal ion binding"/>
    <property type="evidence" value="ECO:0007669"/>
    <property type="project" value="UniProtKB-KW"/>
</dbReference>
<dbReference type="GO" id="GO:0006265">
    <property type="term" value="P:DNA topological change"/>
    <property type="evidence" value="ECO:0007669"/>
    <property type="project" value="UniProtKB-UniRule"/>
</dbReference>
<dbReference type="CDD" id="cd00186">
    <property type="entry name" value="TOP1Ac"/>
    <property type="match status" value="1"/>
</dbReference>
<dbReference type="CDD" id="cd03363">
    <property type="entry name" value="TOPRIM_TopoIA_TopoI"/>
    <property type="match status" value="1"/>
</dbReference>
<dbReference type="Gene3D" id="3.40.50.140">
    <property type="match status" value="1"/>
</dbReference>
<dbReference type="Gene3D" id="1.10.460.10">
    <property type="entry name" value="Topoisomerase I, domain 2"/>
    <property type="match status" value="1"/>
</dbReference>
<dbReference type="Gene3D" id="2.70.20.10">
    <property type="entry name" value="Topoisomerase I, domain 3"/>
    <property type="match status" value="1"/>
</dbReference>
<dbReference type="Gene3D" id="1.10.290.10">
    <property type="entry name" value="Topoisomerase I, domain 4"/>
    <property type="match status" value="1"/>
</dbReference>
<dbReference type="HAMAP" id="MF_00952">
    <property type="entry name" value="Topoisom_1_prok"/>
    <property type="match status" value="1"/>
</dbReference>
<dbReference type="InterPro" id="IPR000380">
    <property type="entry name" value="Topo_IA"/>
</dbReference>
<dbReference type="InterPro" id="IPR003601">
    <property type="entry name" value="Topo_IA_2"/>
</dbReference>
<dbReference type="InterPro" id="IPR023406">
    <property type="entry name" value="Topo_IA_AS"/>
</dbReference>
<dbReference type="InterPro" id="IPR013497">
    <property type="entry name" value="Topo_IA_cen"/>
</dbReference>
<dbReference type="InterPro" id="IPR013824">
    <property type="entry name" value="Topo_IA_cen_sub1"/>
</dbReference>
<dbReference type="InterPro" id="IPR013825">
    <property type="entry name" value="Topo_IA_cen_sub2"/>
</dbReference>
<dbReference type="InterPro" id="IPR013826">
    <property type="entry name" value="Topo_IA_cen_sub3"/>
</dbReference>
<dbReference type="InterPro" id="IPR023405">
    <property type="entry name" value="Topo_IA_core_domain"/>
</dbReference>
<dbReference type="InterPro" id="IPR003602">
    <property type="entry name" value="Topo_IA_DNA-bd_dom"/>
</dbReference>
<dbReference type="InterPro" id="IPR005733">
    <property type="entry name" value="TopoI_bac-type"/>
</dbReference>
<dbReference type="InterPro" id="IPR028612">
    <property type="entry name" value="Topoisom_1_IA"/>
</dbReference>
<dbReference type="InterPro" id="IPR025589">
    <property type="entry name" value="Toprim_C_rpt"/>
</dbReference>
<dbReference type="InterPro" id="IPR006171">
    <property type="entry name" value="TOPRIM_dom"/>
</dbReference>
<dbReference type="InterPro" id="IPR034149">
    <property type="entry name" value="TOPRIM_TopoI"/>
</dbReference>
<dbReference type="NCBIfam" id="TIGR01051">
    <property type="entry name" value="topA_bact"/>
    <property type="match status" value="1"/>
</dbReference>
<dbReference type="PANTHER" id="PTHR42785:SF1">
    <property type="entry name" value="DNA TOPOISOMERASE"/>
    <property type="match status" value="1"/>
</dbReference>
<dbReference type="PANTHER" id="PTHR42785">
    <property type="entry name" value="DNA TOPOISOMERASE, TYPE IA, CORE"/>
    <property type="match status" value="1"/>
</dbReference>
<dbReference type="Pfam" id="PF01131">
    <property type="entry name" value="Topoisom_bac"/>
    <property type="match status" value="1"/>
</dbReference>
<dbReference type="Pfam" id="PF01751">
    <property type="entry name" value="Toprim"/>
    <property type="match status" value="1"/>
</dbReference>
<dbReference type="Pfam" id="PF13368">
    <property type="entry name" value="Toprim_C_rpt"/>
    <property type="match status" value="4"/>
</dbReference>
<dbReference type="PRINTS" id="PR00417">
    <property type="entry name" value="PRTPISMRASEI"/>
</dbReference>
<dbReference type="SMART" id="SM00437">
    <property type="entry name" value="TOP1Ac"/>
    <property type="match status" value="1"/>
</dbReference>
<dbReference type="SMART" id="SM00436">
    <property type="entry name" value="TOP1Bc"/>
    <property type="match status" value="1"/>
</dbReference>
<dbReference type="SMART" id="SM00493">
    <property type="entry name" value="TOPRIM"/>
    <property type="match status" value="1"/>
</dbReference>
<dbReference type="SUPFAM" id="SSF56712">
    <property type="entry name" value="Prokaryotic type I DNA topoisomerase"/>
    <property type="match status" value="1"/>
</dbReference>
<dbReference type="PROSITE" id="PS00396">
    <property type="entry name" value="TOPO_IA_1"/>
    <property type="match status" value="1"/>
</dbReference>
<dbReference type="PROSITE" id="PS52039">
    <property type="entry name" value="TOPO_IA_2"/>
    <property type="match status" value="1"/>
</dbReference>
<dbReference type="PROSITE" id="PS50880">
    <property type="entry name" value="TOPRIM"/>
    <property type="match status" value="1"/>
</dbReference>
<feature type="chain" id="PRO_0000145168" description="DNA topoisomerase 1">
    <location>
        <begin position="1"/>
        <end position="898"/>
    </location>
</feature>
<feature type="domain" description="Toprim" evidence="1">
    <location>
        <begin position="2"/>
        <end position="126"/>
    </location>
</feature>
<feature type="domain" description="Topo IA-type catalytic" evidence="2">
    <location>
        <begin position="141"/>
        <end position="583"/>
    </location>
</feature>
<feature type="region of interest" description="Interaction with DNA" evidence="1">
    <location>
        <begin position="175"/>
        <end position="180"/>
    </location>
</feature>
<feature type="region of interest" description="Disordered" evidence="3">
    <location>
        <begin position="840"/>
        <end position="898"/>
    </location>
</feature>
<feature type="compositionally biased region" description="Basic residues" evidence="3">
    <location>
        <begin position="848"/>
        <end position="866"/>
    </location>
</feature>
<feature type="compositionally biased region" description="Low complexity" evidence="3">
    <location>
        <begin position="867"/>
        <end position="877"/>
    </location>
</feature>
<feature type="compositionally biased region" description="Basic residues" evidence="3">
    <location>
        <begin position="878"/>
        <end position="888"/>
    </location>
</feature>
<feature type="active site" description="O-(5'-phospho-DNA)-tyrosine intermediate" evidence="2">
    <location>
        <position position="320"/>
    </location>
</feature>
<feature type="binding site" evidence="1">
    <location>
        <position position="8"/>
    </location>
    <ligand>
        <name>Mg(2+)</name>
        <dbReference type="ChEBI" id="CHEBI:18420"/>
        <note>catalytic</note>
    </ligand>
</feature>
<feature type="binding site" evidence="1">
    <location>
        <position position="95"/>
    </location>
    <ligand>
        <name>Mg(2+)</name>
        <dbReference type="ChEBI" id="CHEBI:18420"/>
        <note>catalytic</note>
    </ligand>
</feature>
<feature type="site" description="Interaction with DNA" evidence="1">
    <location>
        <position position="32"/>
    </location>
</feature>
<feature type="site" description="Interaction with DNA" evidence="1">
    <location>
        <position position="151"/>
    </location>
</feature>
<feature type="site" description="Interaction with DNA" evidence="1">
    <location>
        <position position="152"/>
    </location>
</feature>
<feature type="site" description="Interaction with DNA" evidence="1">
    <location>
        <position position="155"/>
    </location>
</feature>
<feature type="site" description="Interaction with DNA" evidence="1">
    <location>
        <position position="160"/>
    </location>
</feature>
<feature type="site" description="Interaction with DNA" evidence="1">
    <location>
        <position position="167"/>
    </location>
</feature>
<feature type="site" description="Interaction with DNA" evidence="1">
    <location>
        <position position="322"/>
    </location>
</feature>
<feature type="site" description="Interaction with DNA" evidence="1">
    <location>
        <position position="515"/>
    </location>
</feature>
<organism>
    <name type="scientific">Synechocystis sp. (strain ATCC 27184 / PCC 6803 / Kazusa)</name>
    <dbReference type="NCBI Taxonomy" id="1111708"/>
    <lineage>
        <taxon>Bacteria</taxon>
        <taxon>Bacillati</taxon>
        <taxon>Cyanobacteriota</taxon>
        <taxon>Cyanophyceae</taxon>
        <taxon>Synechococcales</taxon>
        <taxon>Merismopediaceae</taxon>
        <taxon>Synechocystis</taxon>
    </lineage>
</organism>
<gene>
    <name evidence="1" type="primary">topA</name>
    <name type="ordered locus">slr2058</name>
</gene>
<reference key="1">
    <citation type="journal article" date="1996" name="DNA Res.">
        <title>Sequence analysis of the genome of the unicellular cyanobacterium Synechocystis sp. strain PCC6803. II. Sequence determination of the entire genome and assignment of potential protein-coding regions.</title>
        <authorList>
            <person name="Kaneko T."/>
            <person name="Sato S."/>
            <person name="Kotani H."/>
            <person name="Tanaka A."/>
            <person name="Asamizu E."/>
            <person name="Nakamura Y."/>
            <person name="Miyajima N."/>
            <person name="Hirosawa M."/>
            <person name="Sugiura M."/>
            <person name="Sasamoto S."/>
            <person name="Kimura T."/>
            <person name="Hosouchi T."/>
            <person name="Matsuno A."/>
            <person name="Muraki A."/>
            <person name="Nakazaki N."/>
            <person name="Naruo K."/>
            <person name="Okumura S."/>
            <person name="Shimpo S."/>
            <person name="Takeuchi C."/>
            <person name="Wada T."/>
            <person name="Watanabe A."/>
            <person name="Yamada M."/>
            <person name="Yasuda M."/>
            <person name="Tabata S."/>
        </authorList>
    </citation>
    <scope>NUCLEOTIDE SEQUENCE [LARGE SCALE GENOMIC DNA]</scope>
    <source>
        <strain>ATCC 27184 / PCC 6803 / Kazusa</strain>
    </source>
</reference>